<comment type="function">
    <text evidence="3">Cytochrome P450 monooxygenase; part of the gene cluster that mediates the biosynthesis of the phthalide-terpenoid hybrid 11'-O-desmethylfendlerol (PubMed:38404388). Within the pathway, mfmF catalyzes C-3 hydroxylation of 5-hydroxy-4-(hydroxymethyl)-7-methoxy-6-methylphthalide to yield cyclopolic acid (PubMed:38404388). The biosynthesis of 11'-O-desmethylfendlerol begins with the NR-PKS mfmB that forms 3,5-dimethylorsellinic acid (DMOA), which is then transformed into the phthalide 5,7-dihydroxy-4-(hydroxymethyl)-6-methylphthalide by the cytochrome P450 monooxygenase mfmA and the hydrolase mfmC. Subsequently, the methyltransferase mfmE catalyzes 7-O-methylation to yield 5-hydroxy-4-(hydroxymethyl)-7-methoxy-6-methylphthalide, which undergoes C-3 hydroxylation by the cytochrome P450 monooxygenase mfmF. The resultant cyclopolic acid (2,5-dihydroxy-4-(hydroxymethyl)-7-methoxy-6-methylphthalide) is then farnesylated by the DMATS-type prenyltransferase mfmD to afford 5-O-farnesylcyclopolic acid. Finally, the Pyr4-family terpene cyclase mfmH cyclizes the farnesyl moiety of 5-O-farnesylcyclopolic acid into a drimane-like structure, thus completing the biosynthesis of 11'-O-desmethylfendlerol (PubMed:38404388).</text>
</comment>
<comment type="cofactor">
    <cofactor evidence="1">
        <name>heme</name>
        <dbReference type="ChEBI" id="CHEBI:30413"/>
    </cofactor>
</comment>
<comment type="pathway">
    <text evidence="3">Secondary metabolite biosynthesis; terpenoid biosynthesis.</text>
</comment>
<comment type="subcellular location">
    <subcellularLocation>
        <location evidence="2">Membrane</location>
        <topology evidence="2">Multi-pass membrane protein</topology>
    </subcellularLocation>
</comment>
<comment type="similarity">
    <text evidence="5">Belongs to the cytochrome P450 family.</text>
</comment>
<dbReference type="EC" id="1.-.-.-" evidence="3"/>
<dbReference type="EMBL" id="MU403194">
    <property type="protein sequence ID" value="KAI1452417.1"/>
    <property type="molecule type" value="Genomic_DNA"/>
</dbReference>
<dbReference type="UniPathway" id="UPA00213"/>
<dbReference type="CDD" id="cd11062">
    <property type="entry name" value="CYP58-like"/>
    <property type="match status" value="1"/>
</dbReference>
<dbReference type="Gene3D" id="1.10.630.10">
    <property type="entry name" value="Cytochrome P450"/>
    <property type="match status" value="1"/>
</dbReference>
<dbReference type="InterPro" id="IPR001128">
    <property type="entry name" value="Cyt_P450"/>
</dbReference>
<dbReference type="InterPro" id="IPR017972">
    <property type="entry name" value="Cyt_P450_CS"/>
</dbReference>
<dbReference type="InterPro" id="IPR002403">
    <property type="entry name" value="Cyt_P450_E_grp-IV"/>
</dbReference>
<dbReference type="InterPro" id="IPR036396">
    <property type="entry name" value="Cyt_P450_sf"/>
</dbReference>
<dbReference type="InterPro" id="IPR050121">
    <property type="entry name" value="Cytochrome_P450_monoxygenase"/>
</dbReference>
<dbReference type="PANTHER" id="PTHR24305">
    <property type="entry name" value="CYTOCHROME P450"/>
    <property type="match status" value="1"/>
</dbReference>
<dbReference type="PANTHER" id="PTHR24305:SF156">
    <property type="entry name" value="P450, PUTATIVE (EUROFUNG)-RELATED"/>
    <property type="match status" value="1"/>
</dbReference>
<dbReference type="Pfam" id="PF00067">
    <property type="entry name" value="p450"/>
    <property type="match status" value="1"/>
</dbReference>
<dbReference type="PRINTS" id="PR00465">
    <property type="entry name" value="EP450IV"/>
</dbReference>
<dbReference type="PRINTS" id="PR00385">
    <property type="entry name" value="P450"/>
</dbReference>
<dbReference type="SUPFAM" id="SSF48264">
    <property type="entry name" value="Cytochrome P450"/>
    <property type="match status" value="1"/>
</dbReference>
<dbReference type="PROSITE" id="PS00086">
    <property type="entry name" value="CYTOCHROME_P450"/>
    <property type="match status" value="1"/>
</dbReference>
<organism>
    <name type="scientific">Annulohypoxylon moriforme</name>
    <name type="common">Filamentous fungus</name>
    <name type="synonym">Hypoxylon moriforme</name>
    <dbReference type="NCBI Taxonomy" id="326622"/>
    <lineage>
        <taxon>Eukaryota</taxon>
        <taxon>Fungi</taxon>
        <taxon>Dikarya</taxon>
        <taxon>Ascomycota</taxon>
        <taxon>Pezizomycotina</taxon>
        <taxon>Sordariomycetes</taxon>
        <taxon>Xylariomycetidae</taxon>
        <taxon>Xylariales</taxon>
        <taxon>Hypoxylaceae</taxon>
        <taxon>Annulohypoxylon</taxon>
    </lineage>
</organism>
<gene>
    <name evidence="4" type="primary">mfmF</name>
    <name type="ORF">F4805DRAFT_472414</name>
</gene>
<sequence length="493" mass="54627">MWSLIPLTAIVLVLVAILHRLFFHPLSHVPGPFLARFSSLYLHSICYLGIEATVLRQLHIKYKTKVLRVAPNSVSISDSEAVGEIYVRGGGFPKDDRYKNFNLGPIVSIFSSLDREYRDVRAKAVAPLFSPAQLRAESGPQGVIGGCIAEFVDQLRKSKEAGIGADLMDMCARLSIDVVTGYLLGQKYGGLQENAHLPPQERQSHKLSANPFIFSIVAFSRFSLLPHRIFQFLYSTSQRLSTNDEVTESFLKLDRFTNNVLEGTTAGEKVSEKPNGGYYHERLISQAGISRMEAAAQSQAVLFAGADSTAVMLATILFHLVQNGAARSRLLCEVRSDKPQDMRFLRAVVKEGLRLGMANPTRMTRVVPKSGPGLRVGDVLLSPGTIVGCAAYNLHHDPEVFPDPFTFRPERWLDDGTDRGLRRPGMEKSMIPFGVGSRACIGKNLAQQQLHDTVVAVIDSEVLEGARTCQERIEIIEWFNADIKGHHLDIKWS</sequence>
<feature type="chain" id="PRO_0000461995" description="Cytochrome P450 monooxygenase mfmF">
    <location>
        <begin position="1"/>
        <end position="493"/>
    </location>
</feature>
<feature type="transmembrane region" description="Helical" evidence="2">
    <location>
        <begin position="3"/>
        <end position="23"/>
    </location>
</feature>
<feature type="transmembrane region" description="Helical" evidence="2">
    <location>
        <begin position="301"/>
        <end position="321"/>
    </location>
</feature>
<feature type="binding site" description="axial binding residue" evidence="1">
    <location>
        <position position="440"/>
    </location>
    <ligand>
        <name>heme</name>
        <dbReference type="ChEBI" id="CHEBI:30413"/>
    </ligand>
    <ligandPart>
        <name>Fe</name>
        <dbReference type="ChEBI" id="CHEBI:18248"/>
    </ligandPart>
</feature>
<keyword id="KW-0349">Heme</keyword>
<keyword id="KW-0408">Iron</keyword>
<keyword id="KW-0472">Membrane</keyword>
<keyword id="KW-0479">Metal-binding</keyword>
<keyword id="KW-0503">Monooxygenase</keyword>
<keyword id="KW-0560">Oxidoreductase</keyword>
<keyword id="KW-0812">Transmembrane</keyword>
<keyword id="KW-1133">Transmembrane helix</keyword>
<evidence type="ECO:0000250" key="1">
    <source>
        <dbReference type="UniProtKB" id="P04798"/>
    </source>
</evidence>
<evidence type="ECO:0000255" key="2"/>
<evidence type="ECO:0000269" key="3">
    <source>
    </source>
</evidence>
<evidence type="ECO:0000303" key="4">
    <source>
    </source>
</evidence>
<evidence type="ECO:0000305" key="5"/>
<proteinExistence type="evidence at protein level"/>
<accession>P9WEG5</accession>
<reference key="1">
    <citation type="journal article" date="2022" name="New Phytol.">
        <title>Ecological generalism drives hyperdiversity of secondary metabolite gene clusters in xylarialean endophytes.</title>
        <authorList>
            <person name="Franco M.E.E."/>
            <person name="Wisecaver J.H."/>
            <person name="Arnold A.E."/>
            <person name="Ju Y.M."/>
            <person name="Slot J.C."/>
            <person name="Ahrendt S."/>
            <person name="Moore L.P."/>
            <person name="Eastman K.E."/>
            <person name="Scott K."/>
            <person name="Konkel Z."/>
            <person name="Mondo S.J."/>
            <person name="Kuo A."/>
            <person name="Hayes R.D."/>
            <person name="Haridas S."/>
            <person name="Andreopoulos B."/>
            <person name="Riley R."/>
            <person name="LaButti K."/>
            <person name="Pangilinan J."/>
            <person name="Lipzen A."/>
            <person name="Amirebrahimi M."/>
            <person name="Yan J."/>
            <person name="Adam C."/>
            <person name="Keymanesh K."/>
            <person name="Ng V."/>
            <person name="Louie K."/>
            <person name="Northen T."/>
            <person name="Drula E."/>
            <person name="Henrissat B."/>
            <person name="Hsieh H.M."/>
            <person name="Youens-Clark K."/>
            <person name="Lutzoni F."/>
            <person name="Miadlikowska J."/>
            <person name="Eastwood D.C."/>
            <person name="Hamelin R.C."/>
            <person name="Grigoriev I.V."/>
            <person name="U'Ren J.M."/>
        </authorList>
    </citation>
    <scope>NUCLEOTIDE SEQUENCE [GENOMIC DNA]</scope>
    <source>
        <strain>CBS 123579</strain>
    </source>
</reference>
<reference key="2">
    <citation type="journal article" date="2024" name="Chem. Sci.">
        <title>Global genome mining-driven discovery of an unusual biosynthetic logic for fungal polyketide-terpenoid hybrids.</title>
        <authorList>
            <person name="Yan D."/>
            <person name="Matsuda Y."/>
        </authorList>
    </citation>
    <scope>FUNCTION</scope>
    <scope>CATALYTIC ACTIVITY</scope>
    <scope>PATHWAY</scope>
    <source>
        <strain>CBS 123579</strain>
    </source>
</reference>
<protein>
    <recommendedName>
        <fullName evidence="4">Cytochrome P450 monooxygenase mfmF</fullName>
        <ecNumber evidence="3">1.-.-.-</ecNumber>
    </recommendedName>
    <alternativeName>
        <fullName evidence="4">11'-O-desmethylfendlerol biosynthesis cluster protein F</fullName>
    </alternativeName>
</protein>
<name>MFMF_ANNMO</name>